<comment type="function">
    <text evidence="1 6 8">Core component of the splicing-dependent multiprotein exon junction complex (EJC) deposited at splice junctions on mRNAs. The EJC is a dynamic structure consisting of core proteins and several peripheral nuclear and cytoplasmic associated factors that join the complex only transiently either during EJC assembly or during subsequent mRNA metabolism. The EJC marks the position of the exon-exon junction in the mature mRNA for the gene expression machinery and the core components remain bound to spliced mRNAs throughout all stages of mRNA metabolism thereby influencing downstream processes including nuclear mRNA export, subcellular mRNA localization, translation efficiency and nonsense-mediated mRNA decay (NMD). The MAGO-Y14 heterodimer inhibits the ATPase activity of EIF4A3, thereby trapping the ATP-bound EJC core onto spliced mRNA in a stable conformation. The MAGO-Y14 heterodimer interacts with the EJC key regulator PYM leading to EJC disassembly in the cytoplasm (By similarity). Can increase in vitro the expression from reporter constructs that contain leader introns required for the expression of different genes. In association with MAGO and PYM, participates in intron-mediated enhancement of gene expression (PubMed:21676911). The MAGO-Y14 heterodimer works synergistically with the NMD pathway to regulate male gametophyte development (PubMed:26867216).</text>
</comment>
<comment type="subunit">
    <text evidence="4 5 6 7 8 11 12">Heterodimer with MAGO (PubMed:19435936, PubMed:24416299, PubMed:26867216). Part of the mRNA splicing-dependent exon junction complex (EJC); the core complex contains MLN51/CASC3, EIF4A3, MAGO and Y14 (Probable). Interacts with PYM (PubMed:16953428, PubMed:21676911). The interaction with PYM is direct and dissociates the EJC from spliced mRNAs (Probable). Weakly interacts with EIF4A3 (PubMed:19435936).</text>
</comment>
<comment type="subcellular location">
    <subcellularLocation>
        <location evidence="5">Nucleus</location>
        <location evidence="5">Nucleolus</location>
    </subcellularLocation>
    <subcellularLocation>
        <location evidence="5">Nucleus speckle</location>
    </subcellularLocation>
    <subcellularLocation>
        <location evidence="1">Cytoplasm</location>
    </subcellularLocation>
    <text evidence="1">Nucleocytoplasmic shuttling protein. Travels to the cytoplasm as part of the exon junction complex (EJC) bound to mRNA.</text>
</comment>
<comment type="tissue specificity">
    <text evidence="6">Expressed in root and shoot meristems, cotyledons, vascular tissues of leaves, receptacle of flowers and siliques, and pollen grains.</text>
</comment>
<comment type="similarity">
    <text evidence="10">Belongs to the RBM8A family.</text>
</comment>
<comment type="sequence caution" evidence="10">
    <conflict type="erroneous gene model prediction">
        <sequence resource="EMBL-CDS" id="AAG52616"/>
    </conflict>
</comment>
<comment type="sequence caution" evidence="10">
    <conflict type="frameshift">
        <sequence resource="EMBL-CDS" id="AAK73941"/>
    </conflict>
</comment>
<comment type="sequence caution" evidence="10">
    <conflict type="frameshift">
        <sequence resource="EMBL-CDS" id="AAM16181"/>
    </conflict>
</comment>
<reference key="1">
    <citation type="journal article" date="2014" name="PLoS ONE">
        <title>Slow co-evolution of the MAGO and Y14 protein families is required for the maintenance of their obligate heterodimerization mode.</title>
        <authorList>
            <person name="Gong P."/>
            <person name="Zhao M."/>
            <person name="He C."/>
        </authorList>
    </citation>
    <scope>NUCLEOTIDE SEQUENCE [MRNA]</scope>
    <scope>INTERACTION WITH MAGO</scope>
</reference>
<reference key="2">
    <citation type="journal article" date="2000" name="Nature">
        <title>Sequence and analysis of chromosome 1 of the plant Arabidopsis thaliana.</title>
        <authorList>
            <person name="Theologis A."/>
            <person name="Ecker J.R."/>
            <person name="Palm C.J."/>
            <person name="Federspiel N.A."/>
            <person name="Kaul S."/>
            <person name="White O."/>
            <person name="Alonso J."/>
            <person name="Altafi H."/>
            <person name="Araujo R."/>
            <person name="Bowman C.L."/>
            <person name="Brooks S.Y."/>
            <person name="Buehler E."/>
            <person name="Chan A."/>
            <person name="Chao Q."/>
            <person name="Chen H."/>
            <person name="Cheuk R.F."/>
            <person name="Chin C.W."/>
            <person name="Chung M.K."/>
            <person name="Conn L."/>
            <person name="Conway A.B."/>
            <person name="Conway A.R."/>
            <person name="Creasy T.H."/>
            <person name="Dewar K."/>
            <person name="Dunn P."/>
            <person name="Etgu P."/>
            <person name="Feldblyum T.V."/>
            <person name="Feng J.-D."/>
            <person name="Fong B."/>
            <person name="Fujii C.Y."/>
            <person name="Gill J.E."/>
            <person name="Goldsmith A.D."/>
            <person name="Haas B."/>
            <person name="Hansen N.F."/>
            <person name="Hughes B."/>
            <person name="Huizar L."/>
            <person name="Hunter J.L."/>
            <person name="Jenkins J."/>
            <person name="Johnson-Hopson C."/>
            <person name="Khan S."/>
            <person name="Khaykin E."/>
            <person name="Kim C.J."/>
            <person name="Koo H.L."/>
            <person name="Kremenetskaia I."/>
            <person name="Kurtz D.B."/>
            <person name="Kwan A."/>
            <person name="Lam B."/>
            <person name="Langin-Hooper S."/>
            <person name="Lee A."/>
            <person name="Lee J.M."/>
            <person name="Lenz C.A."/>
            <person name="Li J.H."/>
            <person name="Li Y.-P."/>
            <person name="Lin X."/>
            <person name="Liu S.X."/>
            <person name="Liu Z.A."/>
            <person name="Luros J.S."/>
            <person name="Maiti R."/>
            <person name="Marziali A."/>
            <person name="Militscher J."/>
            <person name="Miranda M."/>
            <person name="Nguyen M."/>
            <person name="Nierman W.C."/>
            <person name="Osborne B.I."/>
            <person name="Pai G."/>
            <person name="Peterson J."/>
            <person name="Pham P.K."/>
            <person name="Rizzo M."/>
            <person name="Rooney T."/>
            <person name="Rowley D."/>
            <person name="Sakano H."/>
            <person name="Salzberg S.L."/>
            <person name="Schwartz J.R."/>
            <person name="Shinn P."/>
            <person name="Southwick A.M."/>
            <person name="Sun H."/>
            <person name="Tallon L.J."/>
            <person name="Tambunga G."/>
            <person name="Toriumi M.J."/>
            <person name="Town C.D."/>
            <person name="Utterback T."/>
            <person name="Van Aken S."/>
            <person name="Vaysberg M."/>
            <person name="Vysotskaia V.S."/>
            <person name="Walker M."/>
            <person name="Wu D."/>
            <person name="Yu G."/>
            <person name="Fraser C.M."/>
            <person name="Venter J.C."/>
            <person name="Davis R.W."/>
        </authorList>
    </citation>
    <scope>NUCLEOTIDE SEQUENCE [LARGE SCALE GENOMIC DNA]</scope>
    <source>
        <strain>cv. Columbia</strain>
    </source>
</reference>
<reference key="3">
    <citation type="journal article" date="2017" name="Plant J.">
        <title>Araport11: a complete reannotation of the Arabidopsis thaliana reference genome.</title>
        <authorList>
            <person name="Cheng C.Y."/>
            <person name="Krishnakumar V."/>
            <person name="Chan A.P."/>
            <person name="Thibaud-Nissen F."/>
            <person name="Schobel S."/>
            <person name="Town C.D."/>
        </authorList>
    </citation>
    <scope>GENOME REANNOTATION</scope>
    <source>
        <strain>cv. Columbia</strain>
    </source>
</reference>
<reference key="4">
    <citation type="journal article" date="2003" name="Science">
        <title>Empirical analysis of transcriptional activity in the Arabidopsis genome.</title>
        <authorList>
            <person name="Yamada K."/>
            <person name="Lim J."/>
            <person name="Dale J.M."/>
            <person name="Chen H."/>
            <person name="Shinn P."/>
            <person name="Palm C.J."/>
            <person name="Southwick A.M."/>
            <person name="Wu H.C."/>
            <person name="Kim C.J."/>
            <person name="Nguyen M."/>
            <person name="Pham P.K."/>
            <person name="Cheuk R.F."/>
            <person name="Karlin-Newmann G."/>
            <person name="Liu S.X."/>
            <person name="Lam B."/>
            <person name="Sakano H."/>
            <person name="Wu T."/>
            <person name="Yu G."/>
            <person name="Miranda M."/>
            <person name="Quach H.L."/>
            <person name="Tripp M."/>
            <person name="Chang C.H."/>
            <person name="Lee J.M."/>
            <person name="Toriumi M.J."/>
            <person name="Chan M.M."/>
            <person name="Tang C.C."/>
            <person name="Onodera C.S."/>
            <person name="Deng J.M."/>
            <person name="Akiyama K."/>
            <person name="Ansari Y."/>
            <person name="Arakawa T."/>
            <person name="Banh J."/>
            <person name="Banno F."/>
            <person name="Bowser L."/>
            <person name="Brooks S.Y."/>
            <person name="Carninci P."/>
            <person name="Chao Q."/>
            <person name="Choy N."/>
            <person name="Enju A."/>
            <person name="Goldsmith A.D."/>
            <person name="Gurjal M."/>
            <person name="Hansen N.F."/>
            <person name="Hayashizaki Y."/>
            <person name="Johnson-Hopson C."/>
            <person name="Hsuan V.W."/>
            <person name="Iida K."/>
            <person name="Karnes M."/>
            <person name="Khan S."/>
            <person name="Koesema E."/>
            <person name="Ishida J."/>
            <person name="Jiang P.X."/>
            <person name="Jones T."/>
            <person name="Kawai J."/>
            <person name="Kamiya A."/>
            <person name="Meyers C."/>
            <person name="Nakajima M."/>
            <person name="Narusaka M."/>
            <person name="Seki M."/>
            <person name="Sakurai T."/>
            <person name="Satou M."/>
            <person name="Tamse R."/>
            <person name="Vaysberg M."/>
            <person name="Wallender E.K."/>
            <person name="Wong C."/>
            <person name="Yamamura Y."/>
            <person name="Yuan S."/>
            <person name="Shinozaki K."/>
            <person name="Davis R.W."/>
            <person name="Theologis A."/>
            <person name="Ecker J.R."/>
        </authorList>
    </citation>
    <scope>NUCLEOTIDE SEQUENCE [LARGE SCALE MRNA]</scope>
    <source>
        <strain>cv. Columbia</strain>
    </source>
</reference>
<reference key="5">
    <citation type="submission" date="2002-03" db="EMBL/GenBank/DDBJ databases">
        <title>Full-length cDNA from Arabidopsis thaliana.</title>
        <authorList>
            <person name="Brover V.V."/>
            <person name="Troukhan M.E."/>
            <person name="Alexandrov N.A."/>
            <person name="Lu Y.-P."/>
            <person name="Flavell R.B."/>
            <person name="Feldmann K.A."/>
        </authorList>
    </citation>
    <scope>NUCLEOTIDE SEQUENCE [LARGE SCALE MRNA]</scope>
</reference>
<reference key="6">
    <citation type="journal article" date="2007" name="Planta">
        <title>Biochemical and cellular characterization of the plant ortholog of PYM, a protein that interacts with the exon junction complex core proteins Mago and Y14.</title>
        <authorList>
            <person name="Park N.I."/>
            <person name="Muench D.G."/>
        </authorList>
    </citation>
    <scope>INTERACTION WITH PYM</scope>
</reference>
<reference key="7">
    <citation type="journal article" date="2009" name="Plant Cell">
        <title>Dynamic behavior of Arabidopsis eIF4A-III, putative core protein of exon junction complex: fast relocation to nucleolus and splicing speckles under hypoxia.</title>
        <authorList>
            <person name="Koroleva O.A."/>
            <person name="Calder G."/>
            <person name="Pendle A.F."/>
            <person name="Kim S.H."/>
            <person name="Lewandowska D."/>
            <person name="Simpson C.G."/>
            <person name="Jones I.M."/>
            <person name="Brown J.W.S."/>
            <person name="Shaw P.J."/>
        </authorList>
    </citation>
    <scope>INTERACTION WITH MAGO AND EIF4A3</scope>
    <scope>SUBCELLULAR LOCATION</scope>
</reference>
<reference key="8">
    <citation type="journal article" date="2009" name="Plant Physiol.">
        <title>Large-scale Arabidopsis phosphoproteome profiling reveals novel chloroplast kinase substrates and phosphorylation networks.</title>
        <authorList>
            <person name="Reiland S."/>
            <person name="Messerli G."/>
            <person name="Baerenfaller K."/>
            <person name="Gerrits B."/>
            <person name="Endler A."/>
            <person name="Grossmann J."/>
            <person name="Gruissem W."/>
            <person name="Baginsky S."/>
        </authorList>
    </citation>
    <scope>PHOSPHORYLATION [LARGE SCALE ANALYSIS] AT SER-32</scope>
    <scope>IDENTIFICATION BY MASS SPECTROMETRY [LARGE SCALE ANALYSIS]</scope>
</reference>
<reference key="9">
    <citation type="journal article" date="2011" name="J. Exp. Bot.">
        <title>Functional interconnections of Arabidopsis exon junction complex proteins and genes at multiple steps of gene expression.</title>
        <authorList>
            <person name="Mufarrege E.F."/>
            <person name="Gonzalez D.H."/>
            <person name="Curi G.C."/>
        </authorList>
    </citation>
    <scope>FUNCTION</scope>
    <scope>INTERACTION WITH PYM</scope>
    <scope>TISSUE SPECIFICITY</scope>
</reference>
<reference key="10">
    <citation type="journal article" date="2016" name="PLoS ONE">
        <title>A new mutation, hap1-2, reveals a C terminal domain function in AtMago protein and its biological effects in male gametophyte development in Arabidopsis thaliana.</title>
        <authorList>
            <person name="Cilano K."/>
            <person name="Mazanek Z."/>
            <person name="Khan M."/>
            <person name="Metcalfe S."/>
            <person name="Zhang X.N."/>
        </authorList>
    </citation>
    <scope>FUNCTION</scope>
    <scope>INTERACTION WITH MAGO</scope>
</reference>
<organism>
    <name type="scientific">Arabidopsis thaliana</name>
    <name type="common">Mouse-ear cress</name>
    <dbReference type="NCBI Taxonomy" id="3702"/>
    <lineage>
        <taxon>Eukaryota</taxon>
        <taxon>Viridiplantae</taxon>
        <taxon>Streptophyta</taxon>
        <taxon>Embryophyta</taxon>
        <taxon>Tracheophyta</taxon>
        <taxon>Spermatophyta</taxon>
        <taxon>Magnoliopsida</taxon>
        <taxon>eudicotyledons</taxon>
        <taxon>Gunneridae</taxon>
        <taxon>Pentapetalae</taxon>
        <taxon>rosids</taxon>
        <taxon>malvids</taxon>
        <taxon>Brassicales</taxon>
        <taxon>Brassicaceae</taxon>
        <taxon>Camelineae</taxon>
        <taxon>Arabidopsis</taxon>
    </lineage>
</organism>
<accession>F4I9J7</accession>
<accession>Q8LG23</accession>
<accession>Q94AZ6</accession>
<accession>Q9C8K3</accession>
<sequence length="202" mass="22438">MANIESEAVDFEPEEDDLMDEEGTAIDGADVSPRAGHPRLKSAIAGANGESAKKTKGRGFREEKDSDRQRRLSSRDFESLGSDGRPGPQRSVEGWIILVSGVHEETQEEDITNAFGDFGEIKNLNLNLDRRSGYVKGYALIEYEKKEEAQSAISAMNGAELLTQNVSVDWAFSSGPSGGESYRRKNSRYGRSQRSRSPRRRY</sequence>
<evidence type="ECO:0000250" key="1">
    <source>
        <dbReference type="UniProtKB" id="Q9Y5S9"/>
    </source>
</evidence>
<evidence type="ECO:0000255" key="2">
    <source>
        <dbReference type="PROSITE-ProRule" id="PRU00176"/>
    </source>
</evidence>
<evidence type="ECO:0000256" key="3">
    <source>
        <dbReference type="SAM" id="MobiDB-lite"/>
    </source>
</evidence>
<evidence type="ECO:0000269" key="4">
    <source>
    </source>
</evidence>
<evidence type="ECO:0000269" key="5">
    <source>
    </source>
</evidence>
<evidence type="ECO:0000269" key="6">
    <source>
    </source>
</evidence>
<evidence type="ECO:0000269" key="7">
    <source>
    </source>
</evidence>
<evidence type="ECO:0000269" key="8">
    <source>
    </source>
</evidence>
<evidence type="ECO:0000303" key="9">
    <source>
    </source>
</evidence>
<evidence type="ECO:0000305" key="10"/>
<evidence type="ECO:0000305" key="11">
    <source>
    </source>
</evidence>
<evidence type="ECO:0000305" key="12">
    <source>
    </source>
</evidence>
<evidence type="ECO:0000312" key="13">
    <source>
        <dbReference type="Araport" id="AT1G51510"/>
    </source>
</evidence>
<evidence type="ECO:0000312" key="14">
    <source>
        <dbReference type="EMBL" id="AAG52616.1"/>
    </source>
</evidence>
<evidence type="ECO:0007744" key="15">
    <source>
    </source>
</evidence>
<gene>
    <name evidence="9" type="primary">Y14</name>
    <name evidence="9" type="synonym">RBM8</name>
    <name evidence="13" type="ordered locus">At1g51510</name>
    <name evidence="14" type="ORF">F5D21.5</name>
</gene>
<keyword id="KW-0963">Cytoplasm</keyword>
<keyword id="KW-0507">mRNA processing</keyword>
<keyword id="KW-0508">mRNA splicing</keyword>
<keyword id="KW-0509">mRNA transport</keyword>
<keyword id="KW-0866">Nonsense-mediated mRNA decay</keyword>
<keyword id="KW-0539">Nucleus</keyword>
<keyword id="KW-0597">Phosphoprotein</keyword>
<keyword id="KW-1185">Reference proteome</keyword>
<keyword id="KW-0694">RNA-binding</keyword>
<keyword id="KW-0810">Translation regulation</keyword>
<keyword id="KW-0813">Transport</keyword>
<protein>
    <recommendedName>
        <fullName evidence="10">RNA-binding protein Y14</fullName>
        <shortName evidence="9">AtY14</shortName>
    </recommendedName>
    <alternativeName>
        <fullName evidence="10">RNA-binding protein 8A</fullName>
    </alternativeName>
</protein>
<proteinExistence type="evidence at protein level"/>
<name>Y14_ARATH</name>
<dbReference type="EMBL" id="KF051012">
    <property type="protein sequence ID" value="AHX83798.1"/>
    <property type="molecule type" value="mRNA"/>
</dbReference>
<dbReference type="EMBL" id="AC024261">
    <property type="protein sequence ID" value="AAG52616.1"/>
    <property type="status" value="ALT_SEQ"/>
    <property type="molecule type" value="Genomic_DNA"/>
</dbReference>
<dbReference type="EMBL" id="CP002684">
    <property type="protein sequence ID" value="AEE32675.1"/>
    <property type="molecule type" value="Genomic_DNA"/>
</dbReference>
<dbReference type="EMBL" id="AY045583">
    <property type="protein sequence ID" value="AAK73941.1"/>
    <property type="status" value="ALT_FRAME"/>
    <property type="molecule type" value="mRNA"/>
</dbReference>
<dbReference type="EMBL" id="AY094025">
    <property type="protein sequence ID" value="AAM16181.1"/>
    <property type="status" value="ALT_FRAME"/>
    <property type="molecule type" value="mRNA"/>
</dbReference>
<dbReference type="EMBL" id="AY084501">
    <property type="protein sequence ID" value="AAM61070.1"/>
    <property type="molecule type" value="mRNA"/>
</dbReference>
<dbReference type="PIR" id="E96553">
    <property type="entry name" value="E96553"/>
</dbReference>
<dbReference type="RefSeq" id="NP_564591.1">
    <property type="nucleotide sequence ID" value="NM_104029.4"/>
</dbReference>
<dbReference type="SMR" id="F4I9J7"/>
<dbReference type="FunCoup" id="F4I9J7">
    <property type="interactions" value="4156"/>
</dbReference>
<dbReference type="IntAct" id="F4I9J7">
    <property type="interactions" value="1"/>
</dbReference>
<dbReference type="STRING" id="3702.F4I9J7"/>
<dbReference type="iPTMnet" id="F4I9J7"/>
<dbReference type="PaxDb" id="3702-AT1G51510.1"/>
<dbReference type="ProteomicsDB" id="242523"/>
<dbReference type="EnsemblPlants" id="AT1G51510.1">
    <property type="protein sequence ID" value="AT1G51510.1"/>
    <property type="gene ID" value="AT1G51510"/>
</dbReference>
<dbReference type="GeneID" id="841576"/>
<dbReference type="Gramene" id="AT1G51510.1">
    <property type="protein sequence ID" value="AT1G51510.1"/>
    <property type="gene ID" value="AT1G51510"/>
</dbReference>
<dbReference type="KEGG" id="ath:AT1G51510"/>
<dbReference type="Araport" id="AT1G51510"/>
<dbReference type="TAIR" id="AT1G51510">
    <property type="gene designation" value="Y14"/>
</dbReference>
<dbReference type="eggNOG" id="KOG0130">
    <property type="taxonomic scope" value="Eukaryota"/>
</dbReference>
<dbReference type="HOGENOM" id="CLU_012062_18_1_1"/>
<dbReference type="InParanoid" id="F4I9J7"/>
<dbReference type="OMA" id="IYNHEEF"/>
<dbReference type="OrthoDB" id="15688at2759"/>
<dbReference type="CD-CODE" id="4299E36E">
    <property type="entry name" value="Nucleolus"/>
</dbReference>
<dbReference type="PRO" id="PR:F4I9J7"/>
<dbReference type="Proteomes" id="UP000006548">
    <property type="component" value="Chromosome 1"/>
</dbReference>
<dbReference type="ExpressionAtlas" id="F4I9J7">
    <property type="expression patterns" value="baseline and differential"/>
</dbReference>
<dbReference type="GO" id="GO:0005737">
    <property type="term" value="C:cytoplasm"/>
    <property type="evidence" value="ECO:0000314"/>
    <property type="project" value="TAIR"/>
</dbReference>
<dbReference type="GO" id="GO:0005829">
    <property type="term" value="C:cytosol"/>
    <property type="evidence" value="ECO:0007005"/>
    <property type="project" value="TAIR"/>
</dbReference>
<dbReference type="GO" id="GO:0035145">
    <property type="term" value="C:exon-exon junction complex"/>
    <property type="evidence" value="ECO:0000353"/>
    <property type="project" value="TAIR"/>
</dbReference>
<dbReference type="GO" id="GO:0016604">
    <property type="term" value="C:nuclear body"/>
    <property type="evidence" value="ECO:0007005"/>
    <property type="project" value="TAIR"/>
</dbReference>
<dbReference type="GO" id="GO:0016607">
    <property type="term" value="C:nuclear speck"/>
    <property type="evidence" value="ECO:0007669"/>
    <property type="project" value="UniProtKB-SubCell"/>
</dbReference>
<dbReference type="GO" id="GO:0005730">
    <property type="term" value="C:nucleolus"/>
    <property type="evidence" value="ECO:0007005"/>
    <property type="project" value="TAIR"/>
</dbReference>
<dbReference type="GO" id="GO:0005654">
    <property type="term" value="C:nucleoplasm"/>
    <property type="evidence" value="ECO:0007005"/>
    <property type="project" value="TAIR"/>
</dbReference>
<dbReference type="GO" id="GO:0005634">
    <property type="term" value="C:nucleus"/>
    <property type="evidence" value="ECO:0007005"/>
    <property type="project" value="TAIR"/>
</dbReference>
<dbReference type="GO" id="GO:0003729">
    <property type="term" value="F:mRNA binding"/>
    <property type="evidence" value="ECO:0007005"/>
    <property type="project" value="TAIR"/>
</dbReference>
<dbReference type="GO" id="GO:0006397">
    <property type="term" value="P:mRNA processing"/>
    <property type="evidence" value="ECO:0007669"/>
    <property type="project" value="UniProtKB-KW"/>
</dbReference>
<dbReference type="GO" id="GO:0051028">
    <property type="term" value="P:mRNA transport"/>
    <property type="evidence" value="ECO:0007669"/>
    <property type="project" value="UniProtKB-KW"/>
</dbReference>
<dbReference type="GO" id="GO:0000184">
    <property type="term" value="P:nuclear-transcribed mRNA catabolic process, nonsense-mediated decay"/>
    <property type="evidence" value="ECO:0007669"/>
    <property type="project" value="UniProtKB-KW"/>
</dbReference>
<dbReference type="GO" id="GO:0010628">
    <property type="term" value="P:positive regulation of gene expression"/>
    <property type="evidence" value="ECO:0000270"/>
    <property type="project" value="TAIR"/>
</dbReference>
<dbReference type="GO" id="GO:0006417">
    <property type="term" value="P:regulation of translation"/>
    <property type="evidence" value="ECO:0007669"/>
    <property type="project" value="UniProtKB-KW"/>
</dbReference>
<dbReference type="GO" id="GO:0008380">
    <property type="term" value="P:RNA splicing"/>
    <property type="evidence" value="ECO:0007669"/>
    <property type="project" value="UniProtKB-KW"/>
</dbReference>
<dbReference type="CDD" id="cd12324">
    <property type="entry name" value="RRM_RBM8"/>
    <property type="match status" value="1"/>
</dbReference>
<dbReference type="FunFam" id="3.30.70.330:FF:000525">
    <property type="entry name" value="RNA-binding protein 8A"/>
    <property type="match status" value="1"/>
</dbReference>
<dbReference type="Gene3D" id="3.30.70.330">
    <property type="match status" value="1"/>
</dbReference>
<dbReference type="InterPro" id="IPR012677">
    <property type="entry name" value="Nucleotide-bd_a/b_plait_sf"/>
</dbReference>
<dbReference type="InterPro" id="IPR035979">
    <property type="entry name" value="RBD_domain_sf"/>
</dbReference>
<dbReference type="InterPro" id="IPR008111">
    <property type="entry name" value="RNA-bd_8"/>
</dbReference>
<dbReference type="InterPro" id="IPR000504">
    <property type="entry name" value="RRM_dom"/>
</dbReference>
<dbReference type="InterPro" id="IPR033744">
    <property type="entry name" value="RRM_RBM8"/>
</dbReference>
<dbReference type="PANTHER" id="PTHR45894">
    <property type="entry name" value="RNA-BINDING PROTEIN 8A"/>
    <property type="match status" value="1"/>
</dbReference>
<dbReference type="Pfam" id="PF00076">
    <property type="entry name" value="RRM_1"/>
    <property type="match status" value="1"/>
</dbReference>
<dbReference type="PRINTS" id="PR01738">
    <property type="entry name" value="RNABINDINGM8"/>
</dbReference>
<dbReference type="SMART" id="SM00360">
    <property type="entry name" value="RRM"/>
    <property type="match status" value="1"/>
</dbReference>
<dbReference type="SUPFAM" id="SSF54928">
    <property type="entry name" value="RNA-binding domain, RBD"/>
    <property type="match status" value="1"/>
</dbReference>
<dbReference type="PROSITE" id="PS50102">
    <property type="entry name" value="RRM"/>
    <property type="match status" value="1"/>
</dbReference>
<feature type="chain" id="PRO_0000440124" description="RNA-binding protein Y14">
    <location>
        <begin position="1"/>
        <end position="202"/>
    </location>
</feature>
<feature type="domain" description="RRM" evidence="2">
    <location>
        <begin position="95"/>
        <end position="173"/>
    </location>
</feature>
<feature type="region of interest" description="Disordered" evidence="3">
    <location>
        <begin position="1"/>
        <end position="92"/>
    </location>
</feature>
<feature type="region of interest" description="Disordered" evidence="3">
    <location>
        <begin position="173"/>
        <end position="202"/>
    </location>
</feature>
<feature type="compositionally biased region" description="Acidic residues" evidence="3">
    <location>
        <begin position="7"/>
        <end position="24"/>
    </location>
</feature>
<feature type="compositionally biased region" description="Basic and acidic residues" evidence="3">
    <location>
        <begin position="59"/>
        <end position="78"/>
    </location>
</feature>
<feature type="compositionally biased region" description="Basic residues" evidence="3">
    <location>
        <begin position="184"/>
        <end position="202"/>
    </location>
</feature>
<feature type="modified residue" description="Phosphoserine" evidence="15">
    <location>
        <position position="32"/>
    </location>
</feature>
<feature type="sequence conflict" description="In Ref. 5; AAM61070." evidence="10" ref="5">
    <original>E</original>
    <variation>D</variation>
    <location>
        <position position="62"/>
    </location>
</feature>